<dbReference type="EMBL" id="BC011290">
    <property type="protein sequence ID" value="AAH11290.1"/>
    <property type="molecule type" value="mRNA"/>
</dbReference>
<dbReference type="EMBL" id="BC083157">
    <property type="protein sequence ID" value="AAH83157.1"/>
    <property type="molecule type" value="mRNA"/>
</dbReference>
<dbReference type="CCDS" id="CCDS30421.1"/>
<dbReference type="RefSeq" id="NP_001343296.1">
    <property type="nucleotide sequence ID" value="NM_001356367.1"/>
</dbReference>
<dbReference type="RefSeq" id="NP_666348.1">
    <property type="nucleotide sequence ID" value="NM_146236.2"/>
</dbReference>
<dbReference type="RefSeq" id="XP_006528579.1">
    <property type="nucleotide sequence ID" value="XM_006528516.3"/>
</dbReference>
<dbReference type="RefSeq" id="XP_006528580.1">
    <property type="nucleotide sequence ID" value="XM_006528517.4"/>
</dbReference>
<dbReference type="RefSeq" id="XP_030107187.1">
    <property type="nucleotide sequence ID" value="XM_030251327.1"/>
</dbReference>
<dbReference type="SMR" id="Q921P9"/>
<dbReference type="BioGRID" id="231835">
    <property type="interactions" value="2"/>
</dbReference>
<dbReference type="FunCoup" id="Q921P9">
    <property type="interactions" value="717"/>
</dbReference>
<dbReference type="STRING" id="10090.ENSMUSP00000061875"/>
<dbReference type="iPTMnet" id="Q921P9"/>
<dbReference type="PhosphoSitePlus" id="Q921P9"/>
<dbReference type="PaxDb" id="10090-ENSMUSP00000061875"/>
<dbReference type="ProteomicsDB" id="263086"/>
<dbReference type="Pumba" id="Q921P9"/>
<dbReference type="Antibodypedia" id="29090">
    <property type="antibodies" value="379 antibodies from 30 providers"/>
</dbReference>
<dbReference type="DNASU" id="237052"/>
<dbReference type="Ensembl" id="ENSMUST00000055104.6">
    <property type="protein sequence ID" value="ENSMUSP00000061875.6"/>
    <property type="gene ID" value="ENSMUSG00000049536.6"/>
</dbReference>
<dbReference type="GeneID" id="237052"/>
<dbReference type="KEGG" id="mmu:237052"/>
<dbReference type="UCSC" id="uc009uit.1">
    <property type="organism name" value="mouse"/>
</dbReference>
<dbReference type="AGR" id="MGI:2385317"/>
<dbReference type="CTD" id="9338"/>
<dbReference type="MGI" id="MGI:2385317">
    <property type="gene designation" value="Tceal1"/>
</dbReference>
<dbReference type="VEuPathDB" id="HostDB:ENSMUSG00000049536"/>
<dbReference type="eggNOG" id="ENOG502TCYF">
    <property type="taxonomic scope" value="Eukaryota"/>
</dbReference>
<dbReference type="GeneTree" id="ENSGT00950000183164"/>
<dbReference type="HOGENOM" id="CLU_140430_0_0_1"/>
<dbReference type="InParanoid" id="Q921P9"/>
<dbReference type="OMA" id="HWKAKRN"/>
<dbReference type="OrthoDB" id="9537246at2759"/>
<dbReference type="PhylomeDB" id="Q921P9"/>
<dbReference type="TreeFam" id="TF336871"/>
<dbReference type="BioGRID-ORCS" id="237052">
    <property type="hits" value="0 hits in 78 CRISPR screens"/>
</dbReference>
<dbReference type="PRO" id="PR:Q921P9"/>
<dbReference type="Proteomes" id="UP000000589">
    <property type="component" value="Chromosome X"/>
</dbReference>
<dbReference type="RNAct" id="Q921P9">
    <property type="molecule type" value="protein"/>
</dbReference>
<dbReference type="Bgee" id="ENSMUSG00000049536">
    <property type="expression patterns" value="Expressed in dorsomedial nucleus of hypothalamus and 229 other cell types or tissues"/>
</dbReference>
<dbReference type="GO" id="GO:0005654">
    <property type="term" value="C:nucleoplasm"/>
    <property type="evidence" value="ECO:0007669"/>
    <property type="project" value="Ensembl"/>
</dbReference>
<dbReference type="InterPro" id="IPR021156">
    <property type="entry name" value="TF_A-like/BEX"/>
</dbReference>
<dbReference type="Pfam" id="PF04538">
    <property type="entry name" value="BEX"/>
    <property type="match status" value="1"/>
</dbReference>
<accession>Q921P9</accession>
<sequence length="165" mass="19312">MENTRSENEEQPESTLKIDEEQPAVEQSPENQCSEEDQSSEDLSSEEQSSEEEFFPEELLPELLPEMLLSEDRPPQECLSQKNQFEDRIPMEQPPCGVGKHKLEEGSFKERLARIRPQFIGDIHGRNLSNEEMIQAADELEEMKRVRNKLMIMHWKAKRSRPYPI</sequence>
<keyword id="KW-0539">Nucleus</keyword>
<keyword id="KW-1185">Reference proteome</keyword>
<keyword id="KW-0804">Transcription</keyword>
<keyword id="KW-0805">Transcription regulation</keyword>
<reference key="1">
    <citation type="journal article" date="2004" name="Genome Res.">
        <title>The status, quality, and expansion of the NIH full-length cDNA project: the Mammalian Gene Collection (MGC).</title>
        <authorList>
            <consortium name="The MGC Project Team"/>
        </authorList>
    </citation>
    <scope>NUCLEOTIDE SEQUENCE [LARGE SCALE MRNA]</scope>
    <source>
        <strain>Czech II</strain>
        <strain>FVB/N-3</strain>
        <tissue>Mammary tumor</tissue>
    </source>
</reference>
<comment type="function">
    <text evidence="1">May be involved in transcriptional regulation. Modulates various viral and cellular promoters in a promoter context-dependent manner. Does not bind DNA directly (By similarity).</text>
</comment>
<comment type="subcellular location">
    <subcellularLocation>
        <location evidence="1">Nucleus</location>
    </subcellularLocation>
</comment>
<comment type="similarity">
    <text evidence="3">Belongs to the TFS-II family. TFA subfamily.</text>
</comment>
<proteinExistence type="evidence at transcript level"/>
<feature type="chain" id="PRO_0000239204" description="Transcription elongation factor A protein-like 1">
    <location>
        <begin position="1"/>
        <end position="165"/>
    </location>
</feature>
<feature type="region of interest" description="Disordered" evidence="2">
    <location>
        <begin position="1"/>
        <end position="101"/>
    </location>
</feature>
<feature type="compositionally biased region" description="Acidic residues" evidence="2">
    <location>
        <begin position="33"/>
        <end position="60"/>
    </location>
</feature>
<evidence type="ECO:0000250" key="1"/>
<evidence type="ECO:0000256" key="2">
    <source>
        <dbReference type="SAM" id="MobiDB-lite"/>
    </source>
</evidence>
<evidence type="ECO:0000305" key="3"/>
<evidence type="ECO:0000312" key="4">
    <source>
        <dbReference type="MGI" id="MGI:2385317"/>
    </source>
</evidence>
<protein>
    <recommendedName>
        <fullName evidence="3">Transcription elongation factor A protein-like 1</fullName>
        <shortName>TCEA-like protein 1</shortName>
    </recommendedName>
    <alternativeName>
        <fullName>Transcription elongation factor S-II protein-like 1</fullName>
    </alternativeName>
</protein>
<gene>
    <name evidence="4" type="primary">Tceal1</name>
</gene>
<name>TCAL1_MOUSE</name>
<organism>
    <name type="scientific">Mus musculus</name>
    <name type="common">Mouse</name>
    <dbReference type="NCBI Taxonomy" id="10090"/>
    <lineage>
        <taxon>Eukaryota</taxon>
        <taxon>Metazoa</taxon>
        <taxon>Chordata</taxon>
        <taxon>Craniata</taxon>
        <taxon>Vertebrata</taxon>
        <taxon>Euteleostomi</taxon>
        <taxon>Mammalia</taxon>
        <taxon>Eutheria</taxon>
        <taxon>Euarchontoglires</taxon>
        <taxon>Glires</taxon>
        <taxon>Rodentia</taxon>
        <taxon>Myomorpha</taxon>
        <taxon>Muroidea</taxon>
        <taxon>Muridae</taxon>
        <taxon>Murinae</taxon>
        <taxon>Mus</taxon>
        <taxon>Mus</taxon>
    </lineage>
</organism>